<protein>
    <recommendedName>
        <fullName evidence="1">Argininosuccinate synthase</fullName>
        <ecNumber evidence="1">6.3.4.5</ecNumber>
    </recommendedName>
    <alternativeName>
        <fullName evidence="1">Citrulline--aspartate ligase</fullName>
    </alternativeName>
</protein>
<comment type="catalytic activity">
    <reaction evidence="1">
        <text>L-citrulline + L-aspartate + ATP = 2-(N(omega)-L-arginino)succinate + AMP + diphosphate + H(+)</text>
        <dbReference type="Rhea" id="RHEA:10932"/>
        <dbReference type="ChEBI" id="CHEBI:15378"/>
        <dbReference type="ChEBI" id="CHEBI:29991"/>
        <dbReference type="ChEBI" id="CHEBI:30616"/>
        <dbReference type="ChEBI" id="CHEBI:33019"/>
        <dbReference type="ChEBI" id="CHEBI:57472"/>
        <dbReference type="ChEBI" id="CHEBI:57743"/>
        <dbReference type="ChEBI" id="CHEBI:456215"/>
        <dbReference type="EC" id="6.3.4.5"/>
    </reaction>
</comment>
<comment type="pathway">
    <text evidence="1">Amino-acid biosynthesis; L-arginine biosynthesis; L-arginine from L-ornithine and carbamoyl phosphate: step 2/3.</text>
</comment>
<comment type="subunit">
    <text evidence="1">Homotetramer.</text>
</comment>
<comment type="subcellular location">
    <subcellularLocation>
        <location evidence="1">Cytoplasm</location>
    </subcellularLocation>
</comment>
<comment type="similarity">
    <text evidence="1">Belongs to the argininosuccinate synthase family. Type 1 subfamily.</text>
</comment>
<keyword id="KW-0028">Amino-acid biosynthesis</keyword>
<keyword id="KW-0055">Arginine biosynthesis</keyword>
<keyword id="KW-0067">ATP-binding</keyword>
<keyword id="KW-0963">Cytoplasm</keyword>
<keyword id="KW-0436">Ligase</keyword>
<keyword id="KW-0547">Nucleotide-binding</keyword>
<name>ASSY_MYCVP</name>
<reference key="1">
    <citation type="submission" date="2006-12" db="EMBL/GenBank/DDBJ databases">
        <title>Complete sequence of Mycobacterium vanbaalenii PYR-1.</title>
        <authorList>
            <consortium name="US DOE Joint Genome Institute"/>
            <person name="Copeland A."/>
            <person name="Lucas S."/>
            <person name="Lapidus A."/>
            <person name="Barry K."/>
            <person name="Detter J.C."/>
            <person name="Glavina del Rio T."/>
            <person name="Hammon N."/>
            <person name="Israni S."/>
            <person name="Dalin E."/>
            <person name="Tice H."/>
            <person name="Pitluck S."/>
            <person name="Singan V."/>
            <person name="Schmutz J."/>
            <person name="Larimer F."/>
            <person name="Land M."/>
            <person name="Hauser L."/>
            <person name="Kyrpides N."/>
            <person name="Anderson I.J."/>
            <person name="Miller C."/>
            <person name="Richardson P."/>
        </authorList>
    </citation>
    <scope>NUCLEOTIDE SEQUENCE [LARGE SCALE GENOMIC DNA]</scope>
    <source>
        <strain>DSM 7251 / JCM 13017 / BCRC 16820 / KCTC 9966 / NRRL B-24157 / PYR-1</strain>
    </source>
</reference>
<feature type="chain" id="PRO_1000000413" description="Argininosuccinate synthase">
    <location>
        <begin position="1"/>
        <end position="400"/>
    </location>
</feature>
<feature type="binding site" evidence="1">
    <location>
        <begin position="8"/>
        <end position="16"/>
    </location>
    <ligand>
        <name>ATP</name>
        <dbReference type="ChEBI" id="CHEBI:30616"/>
    </ligand>
</feature>
<feature type="binding site" evidence="1">
    <location>
        <position position="87"/>
    </location>
    <ligand>
        <name>L-citrulline</name>
        <dbReference type="ChEBI" id="CHEBI:57743"/>
    </ligand>
</feature>
<feature type="binding site" evidence="1">
    <location>
        <position position="117"/>
    </location>
    <ligand>
        <name>ATP</name>
        <dbReference type="ChEBI" id="CHEBI:30616"/>
    </ligand>
</feature>
<feature type="binding site" evidence="1">
    <location>
        <position position="119"/>
    </location>
    <ligand>
        <name>L-aspartate</name>
        <dbReference type="ChEBI" id="CHEBI:29991"/>
    </ligand>
</feature>
<feature type="binding site" evidence="1">
    <location>
        <position position="123"/>
    </location>
    <ligand>
        <name>L-aspartate</name>
        <dbReference type="ChEBI" id="CHEBI:29991"/>
    </ligand>
</feature>
<feature type="binding site" evidence="1">
    <location>
        <position position="123"/>
    </location>
    <ligand>
        <name>L-citrulline</name>
        <dbReference type="ChEBI" id="CHEBI:57743"/>
    </ligand>
</feature>
<feature type="binding site" evidence="1">
    <location>
        <position position="124"/>
    </location>
    <ligand>
        <name>L-aspartate</name>
        <dbReference type="ChEBI" id="CHEBI:29991"/>
    </ligand>
</feature>
<feature type="binding site" evidence="1">
    <location>
        <position position="127"/>
    </location>
    <ligand>
        <name>L-citrulline</name>
        <dbReference type="ChEBI" id="CHEBI:57743"/>
    </ligand>
</feature>
<feature type="binding site" evidence="1">
    <location>
        <position position="175"/>
    </location>
    <ligand>
        <name>L-citrulline</name>
        <dbReference type="ChEBI" id="CHEBI:57743"/>
    </ligand>
</feature>
<feature type="binding site" evidence="1">
    <location>
        <position position="260"/>
    </location>
    <ligand>
        <name>L-citrulline</name>
        <dbReference type="ChEBI" id="CHEBI:57743"/>
    </ligand>
</feature>
<feature type="binding site" evidence="1">
    <location>
        <position position="272"/>
    </location>
    <ligand>
        <name>L-citrulline</name>
        <dbReference type="ChEBI" id="CHEBI:57743"/>
    </ligand>
</feature>
<proteinExistence type="inferred from homology"/>
<gene>
    <name evidence="1" type="primary">argG</name>
    <name type="ordered locus">Mvan_3308</name>
</gene>
<evidence type="ECO:0000255" key="1">
    <source>
        <dbReference type="HAMAP-Rule" id="MF_00005"/>
    </source>
</evidence>
<organism>
    <name type="scientific">Mycolicibacterium vanbaalenii (strain DSM 7251 / JCM 13017 / BCRC 16820 / KCTC 9966 / NRRL B-24157 / PYR-1)</name>
    <name type="common">Mycobacterium vanbaalenii</name>
    <dbReference type="NCBI Taxonomy" id="350058"/>
    <lineage>
        <taxon>Bacteria</taxon>
        <taxon>Bacillati</taxon>
        <taxon>Actinomycetota</taxon>
        <taxon>Actinomycetes</taxon>
        <taxon>Mycobacteriales</taxon>
        <taxon>Mycobacteriaceae</taxon>
        <taxon>Mycolicibacterium</taxon>
    </lineage>
</organism>
<accession>A1TAA6</accession>
<dbReference type="EC" id="6.3.4.5" evidence="1"/>
<dbReference type="EMBL" id="CP000511">
    <property type="protein sequence ID" value="ABM14106.1"/>
    <property type="molecule type" value="Genomic_DNA"/>
</dbReference>
<dbReference type="RefSeq" id="WP_011780511.1">
    <property type="nucleotide sequence ID" value="NZ_JACKSD010000031.1"/>
</dbReference>
<dbReference type="SMR" id="A1TAA6"/>
<dbReference type="STRING" id="350058.Mvan_3308"/>
<dbReference type="KEGG" id="mva:Mvan_3308"/>
<dbReference type="eggNOG" id="COG0137">
    <property type="taxonomic scope" value="Bacteria"/>
</dbReference>
<dbReference type="HOGENOM" id="CLU_032784_4_2_11"/>
<dbReference type="UniPathway" id="UPA00068">
    <property type="reaction ID" value="UER00113"/>
</dbReference>
<dbReference type="Proteomes" id="UP000009159">
    <property type="component" value="Chromosome"/>
</dbReference>
<dbReference type="GO" id="GO:0005737">
    <property type="term" value="C:cytoplasm"/>
    <property type="evidence" value="ECO:0007669"/>
    <property type="project" value="UniProtKB-SubCell"/>
</dbReference>
<dbReference type="GO" id="GO:0004055">
    <property type="term" value="F:argininosuccinate synthase activity"/>
    <property type="evidence" value="ECO:0007669"/>
    <property type="project" value="UniProtKB-UniRule"/>
</dbReference>
<dbReference type="GO" id="GO:0005524">
    <property type="term" value="F:ATP binding"/>
    <property type="evidence" value="ECO:0007669"/>
    <property type="project" value="UniProtKB-UniRule"/>
</dbReference>
<dbReference type="GO" id="GO:0000053">
    <property type="term" value="P:argininosuccinate metabolic process"/>
    <property type="evidence" value="ECO:0007669"/>
    <property type="project" value="TreeGrafter"/>
</dbReference>
<dbReference type="GO" id="GO:0006526">
    <property type="term" value="P:L-arginine biosynthetic process"/>
    <property type="evidence" value="ECO:0007669"/>
    <property type="project" value="UniProtKB-UniRule"/>
</dbReference>
<dbReference type="GO" id="GO:0000050">
    <property type="term" value="P:urea cycle"/>
    <property type="evidence" value="ECO:0007669"/>
    <property type="project" value="TreeGrafter"/>
</dbReference>
<dbReference type="CDD" id="cd01999">
    <property type="entry name" value="ASS"/>
    <property type="match status" value="1"/>
</dbReference>
<dbReference type="FunFam" id="3.40.50.620:FF:000038">
    <property type="entry name" value="Argininosuccinate synthase"/>
    <property type="match status" value="1"/>
</dbReference>
<dbReference type="FunFam" id="3.90.1260.10:FF:000007">
    <property type="entry name" value="Argininosuccinate synthase"/>
    <property type="match status" value="1"/>
</dbReference>
<dbReference type="Gene3D" id="3.90.1260.10">
    <property type="entry name" value="Argininosuccinate synthetase, chain A, domain 2"/>
    <property type="match status" value="1"/>
</dbReference>
<dbReference type="Gene3D" id="3.40.50.620">
    <property type="entry name" value="HUPs"/>
    <property type="match status" value="1"/>
</dbReference>
<dbReference type="Gene3D" id="1.20.5.470">
    <property type="entry name" value="Single helix bin"/>
    <property type="match status" value="1"/>
</dbReference>
<dbReference type="HAMAP" id="MF_00005">
    <property type="entry name" value="Arg_succ_synth_type1"/>
    <property type="match status" value="1"/>
</dbReference>
<dbReference type="InterPro" id="IPR048268">
    <property type="entry name" value="Arginosuc_syn_C"/>
</dbReference>
<dbReference type="InterPro" id="IPR048267">
    <property type="entry name" value="Arginosuc_syn_N"/>
</dbReference>
<dbReference type="InterPro" id="IPR001518">
    <property type="entry name" value="Arginosuc_synth"/>
</dbReference>
<dbReference type="InterPro" id="IPR018223">
    <property type="entry name" value="Arginosuc_synth_CS"/>
</dbReference>
<dbReference type="InterPro" id="IPR023434">
    <property type="entry name" value="Arginosuc_synth_type_1_subfam"/>
</dbReference>
<dbReference type="InterPro" id="IPR024074">
    <property type="entry name" value="AS_cat/multimer_dom_body"/>
</dbReference>
<dbReference type="InterPro" id="IPR014729">
    <property type="entry name" value="Rossmann-like_a/b/a_fold"/>
</dbReference>
<dbReference type="NCBIfam" id="TIGR00032">
    <property type="entry name" value="argG"/>
    <property type="match status" value="1"/>
</dbReference>
<dbReference type="NCBIfam" id="NF001770">
    <property type="entry name" value="PRK00509.1"/>
    <property type="match status" value="1"/>
</dbReference>
<dbReference type="PANTHER" id="PTHR11587">
    <property type="entry name" value="ARGININOSUCCINATE SYNTHASE"/>
    <property type="match status" value="1"/>
</dbReference>
<dbReference type="PANTHER" id="PTHR11587:SF2">
    <property type="entry name" value="ARGININOSUCCINATE SYNTHASE"/>
    <property type="match status" value="1"/>
</dbReference>
<dbReference type="Pfam" id="PF20979">
    <property type="entry name" value="Arginosuc_syn_C"/>
    <property type="match status" value="1"/>
</dbReference>
<dbReference type="Pfam" id="PF00764">
    <property type="entry name" value="Arginosuc_synth"/>
    <property type="match status" value="1"/>
</dbReference>
<dbReference type="SUPFAM" id="SSF52402">
    <property type="entry name" value="Adenine nucleotide alpha hydrolases-like"/>
    <property type="match status" value="1"/>
</dbReference>
<dbReference type="SUPFAM" id="SSF69864">
    <property type="entry name" value="Argininosuccinate synthetase, C-terminal domain"/>
    <property type="match status" value="1"/>
</dbReference>
<dbReference type="PROSITE" id="PS00564">
    <property type="entry name" value="ARGININOSUCCIN_SYN_1"/>
    <property type="match status" value="1"/>
</dbReference>
<dbReference type="PROSITE" id="PS00565">
    <property type="entry name" value="ARGININOSUCCIN_SYN_2"/>
    <property type="match status" value="1"/>
</dbReference>
<sequence>MSERVILAYSGGLDTSVAISWIGKETGSEVVAVAIDLGQGGEDMEVVRQRALDCGAVEAVVVDARDEFAEQYCLPAIKSNALYMDRYPLVSALSRPLIVKHLVDAAREHGGGVVAHGCTGKGNDQVRFEVGFASLAPDLKVLAPVRDYAWTREKAIAFAEENAIPINVTKRSPFSIDQNVWGRAVETGFLEHLWNAPTKDVYDYTEDPTLNWSSPDEVIIGFDKGVPVSIDGKPVTVLQAIEQLNARAGAQGVGRLDVVEDRLVGIKSREIYEAPGAMVLITAHTELEHVTLERELGRFKRTTDQKWGELVYDGLWFSPLKTALESFVANTQEHVTGEIRLVLHGGHIAVNGRRSQESLYDFNLATYDEGDTFDQSAAKGFVHVHGLSSSLSARRDLAGK</sequence>